<accession>B9M2S2</accession>
<name>SYR_GEODF</name>
<evidence type="ECO:0000255" key="1">
    <source>
        <dbReference type="HAMAP-Rule" id="MF_00123"/>
    </source>
</evidence>
<feature type="chain" id="PRO_1000198910" description="Arginine--tRNA ligase">
    <location>
        <begin position="1"/>
        <end position="561"/>
    </location>
</feature>
<feature type="short sequence motif" description="'HIGH' region">
    <location>
        <begin position="129"/>
        <end position="139"/>
    </location>
</feature>
<proteinExistence type="inferred from homology"/>
<keyword id="KW-0030">Aminoacyl-tRNA synthetase</keyword>
<keyword id="KW-0067">ATP-binding</keyword>
<keyword id="KW-0963">Cytoplasm</keyword>
<keyword id="KW-0436">Ligase</keyword>
<keyword id="KW-0547">Nucleotide-binding</keyword>
<keyword id="KW-0648">Protein biosynthesis</keyword>
<keyword id="KW-1185">Reference proteome</keyword>
<dbReference type="EC" id="6.1.1.19" evidence="1"/>
<dbReference type="EMBL" id="CP001390">
    <property type="protein sequence ID" value="ACM21268.1"/>
    <property type="molecule type" value="Genomic_DNA"/>
</dbReference>
<dbReference type="RefSeq" id="WP_012647996.1">
    <property type="nucleotide sequence ID" value="NC_011979.1"/>
</dbReference>
<dbReference type="SMR" id="B9M2S2"/>
<dbReference type="STRING" id="316067.Geob_2925"/>
<dbReference type="KEGG" id="geo:Geob_2925"/>
<dbReference type="eggNOG" id="COG0018">
    <property type="taxonomic scope" value="Bacteria"/>
</dbReference>
<dbReference type="HOGENOM" id="CLU_006406_0_1_7"/>
<dbReference type="OrthoDB" id="9803211at2"/>
<dbReference type="Proteomes" id="UP000007721">
    <property type="component" value="Chromosome"/>
</dbReference>
<dbReference type="GO" id="GO:0005737">
    <property type="term" value="C:cytoplasm"/>
    <property type="evidence" value="ECO:0007669"/>
    <property type="project" value="UniProtKB-SubCell"/>
</dbReference>
<dbReference type="GO" id="GO:0004814">
    <property type="term" value="F:arginine-tRNA ligase activity"/>
    <property type="evidence" value="ECO:0007669"/>
    <property type="project" value="UniProtKB-UniRule"/>
</dbReference>
<dbReference type="GO" id="GO:0005524">
    <property type="term" value="F:ATP binding"/>
    <property type="evidence" value="ECO:0007669"/>
    <property type="project" value="UniProtKB-UniRule"/>
</dbReference>
<dbReference type="GO" id="GO:0006420">
    <property type="term" value="P:arginyl-tRNA aminoacylation"/>
    <property type="evidence" value="ECO:0007669"/>
    <property type="project" value="UniProtKB-UniRule"/>
</dbReference>
<dbReference type="CDD" id="cd07956">
    <property type="entry name" value="Anticodon_Ia_Arg"/>
    <property type="match status" value="1"/>
</dbReference>
<dbReference type="CDD" id="cd00671">
    <property type="entry name" value="ArgRS_core"/>
    <property type="match status" value="1"/>
</dbReference>
<dbReference type="FunFam" id="1.10.730.10:FF:000008">
    <property type="entry name" value="Arginine--tRNA ligase"/>
    <property type="match status" value="1"/>
</dbReference>
<dbReference type="FunFam" id="3.30.1360.70:FF:000003">
    <property type="entry name" value="Arginine--tRNA ligase"/>
    <property type="match status" value="1"/>
</dbReference>
<dbReference type="FunFam" id="3.40.50.620:FF:000062">
    <property type="entry name" value="Arginine--tRNA ligase"/>
    <property type="match status" value="1"/>
</dbReference>
<dbReference type="Gene3D" id="3.30.1360.70">
    <property type="entry name" value="Arginyl tRNA synthetase N-terminal domain"/>
    <property type="match status" value="1"/>
</dbReference>
<dbReference type="Gene3D" id="3.40.50.620">
    <property type="entry name" value="HUPs"/>
    <property type="match status" value="1"/>
</dbReference>
<dbReference type="Gene3D" id="1.10.730.10">
    <property type="entry name" value="Isoleucyl-tRNA Synthetase, Domain 1"/>
    <property type="match status" value="1"/>
</dbReference>
<dbReference type="HAMAP" id="MF_00123">
    <property type="entry name" value="Arg_tRNA_synth"/>
    <property type="match status" value="1"/>
</dbReference>
<dbReference type="InterPro" id="IPR001412">
    <property type="entry name" value="aa-tRNA-synth_I_CS"/>
</dbReference>
<dbReference type="InterPro" id="IPR001278">
    <property type="entry name" value="Arg-tRNA-ligase"/>
</dbReference>
<dbReference type="InterPro" id="IPR005148">
    <property type="entry name" value="Arg-tRNA-synth_N"/>
</dbReference>
<dbReference type="InterPro" id="IPR036695">
    <property type="entry name" value="Arg-tRNA-synth_N_sf"/>
</dbReference>
<dbReference type="InterPro" id="IPR035684">
    <property type="entry name" value="ArgRS_core"/>
</dbReference>
<dbReference type="InterPro" id="IPR008909">
    <property type="entry name" value="DALR_anticod-bd"/>
</dbReference>
<dbReference type="InterPro" id="IPR014729">
    <property type="entry name" value="Rossmann-like_a/b/a_fold"/>
</dbReference>
<dbReference type="InterPro" id="IPR009080">
    <property type="entry name" value="tRNAsynth_Ia_anticodon-bd"/>
</dbReference>
<dbReference type="NCBIfam" id="TIGR00456">
    <property type="entry name" value="argS"/>
    <property type="match status" value="1"/>
</dbReference>
<dbReference type="PANTHER" id="PTHR11956:SF5">
    <property type="entry name" value="ARGININE--TRNA LIGASE, CYTOPLASMIC"/>
    <property type="match status" value="1"/>
</dbReference>
<dbReference type="PANTHER" id="PTHR11956">
    <property type="entry name" value="ARGINYL-TRNA SYNTHETASE"/>
    <property type="match status" value="1"/>
</dbReference>
<dbReference type="Pfam" id="PF03485">
    <property type="entry name" value="Arg_tRNA_synt_N"/>
    <property type="match status" value="1"/>
</dbReference>
<dbReference type="Pfam" id="PF05746">
    <property type="entry name" value="DALR_1"/>
    <property type="match status" value="1"/>
</dbReference>
<dbReference type="Pfam" id="PF00750">
    <property type="entry name" value="tRNA-synt_1d"/>
    <property type="match status" value="1"/>
</dbReference>
<dbReference type="PRINTS" id="PR01038">
    <property type="entry name" value="TRNASYNTHARG"/>
</dbReference>
<dbReference type="SMART" id="SM01016">
    <property type="entry name" value="Arg_tRNA_synt_N"/>
    <property type="match status" value="1"/>
</dbReference>
<dbReference type="SMART" id="SM00836">
    <property type="entry name" value="DALR_1"/>
    <property type="match status" value="1"/>
</dbReference>
<dbReference type="SUPFAM" id="SSF47323">
    <property type="entry name" value="Anticodon-binding domain of a subclass of class I aminoacyl-tRNA synthetases"/>
    <property type="match status" value="1"/>
</dbReference>
<dbReference type="SUPFAM" id="SSF55190">
    <property type="entry name" value="Arginyl-tRNA synthetase (ArgRS), N-terminal 'additional' domain"/>
    <property type="match status" value="1"/>
</dbReference>
<dbReference type="SUPFAM" id="SSF52374">
    <property type="entry name" value="Nucleotidylyl transferase"/>
    <property type="match status" value="1"/>
</dbReference>
<dbReference type="PROSITE" id="PS00178">
    <property type="entry name" value="AA_TRNA_LIGASE_I"/>
    <property type="match status" value="1"/>
</dbReference>
<reference key="1">
    <citation type="submission" date="2009-01" db="EMBL/GenBank/DDBJ databases">
        <title>Complete sequence of Geobacter sp. FRC-32.</title>
        <authorList>
            <consortium name="US DOE Joint Genome Institute"/>
            <person name="Lucas S."/>
            <person name="Copeland A."/>
            <person name="Lapidus A."/>
            <person name="Glavina del Rio T."/>
            <person name="Dalin E."/>
            <person name="Tice H."/>
            <person name="Bruce D."/>
            <person name="Goodwin L."/>
            <person name="Pitluck S."/>
            <person name="Saunders E."/>
            <person name="Brettin T."/>
            <person name="Detter J.C."/>
            <person name="Han C."/>
            <person name="Larimer F."/>
            <person name="Land M."/>
            <person name="Hauser L."/>
            <person name="Kyrpides N."/>
            <person name="Ovchinnikova G."/>
            <person name="Kostka J."/>
            <person name="Richardson P."/>
        </authorList>
    </citation>
    <scope>NUCLEOTIDE SEQUENCE [LARGE SCALE GENOMIC DNA]</scope>
    <source>
        <strain>DSM 22248 / JCM 15807 / FRC-32</strain>
    </source>
</reference>
<comment type="catalytic activity">
    <reaction evidence="1">
        <text>tRNA(Arg) + L-arginine + ATP = L-arginyl-tRNA(Arg) + AMP + diphosphate</text>
        <dbReference type="Rhea" id="RHEA:20301"/>
        <dbReference type="Rhea" id="RHEA-COMP:9658"/>
        <dbReference type="Rhea" id="RHEA-COMP:9673"/>
        <dbReference type="ChEBI" id="CHEBI:30616"/>
        <dbReference type="ChEBI" id="CHEBI:32682"/>
        <dbReference type="ChEBI" id="CHEBI:33019"/>
        <dbReference type="ChEBI" id="CHEBI:78442"/>
        <dbReference type="ChEBI" id="CHEBI:78513"/>
        <dbReference type="ChEBI" id="CHEBI:456215"/>
        <dbReference type="EC" id="6.1.1.19"/>
    </reaction>
</comment>
<comment type="subunit">
    <text evidence="1">Monomer.</text>
</comment>
<comment type="subcellular location">
    <subcellularLocation>
        <location evidence="1">Cytoplasm</location>
    </subcellularLocation>
</comment>
<comment type="similarity">
    <text evidence="1">Belongs to the class-I aminoacyl-tRNA synthetase family.</text>
</comment>
<gene>
    <name evidence="1" type="primary">argS</name>
    <name type="ordered locus">Geob_2925</name>
</gene>
<sequence>MKELLRTLISQGLAGCYADGSLSSGEFPSIIIEKPAHADHGDFATNVAMLLAKAEKKAPRMVAETLVSHLADGSGVCEKIEIAGPGFINFHLKDEAWRQTLLEVDQIGFEYGKSGVGGGKKIQVEFVSANPTGPLHIGHGRGAALGDTICRLLSATGWDVTREFYYNDAGQQIANLALSVQARCFGNGPDDPGWPSDGYQGEYIIDVARAYMARETVHADDQHVTAAGDPQDLEAIRRFAVAFLRREQDQDLAAFDVHFDVYSLESDLYADGSVERVVRRLVDSGHTYEQDDALWLRTTSFADDKDRVMRKSGGGYTYFVPDVAYHLRKWERGFTRVVNEQGADHHSTITRVRAGLQALDAGIPAGWPEYVLHQMVTVLRGGEEVKISKRAGSYVTLRDLIDEVGRDATRFFFVMRKPDSQLVFDIDLAKQKSLDNPVYYVQYAHARICSIFENAAEKGFVVPGADGVNLDQLIEPEEMAIVKALAFFPEVVEGSAANFEPHRIANYLQELAGLFHGFYNKNRVITEDSQLTAARLFLLKCVALTLKNALNLLGISAPEKM</sequence>
<organism>
    <name type="scientific">Geotalea daltonii (strain DSM 22248 / JCM 15807 / FRC-32)</name>
    <name type="common">Geobacter daltonii</name>
    <dbReference type="NCBI Taxonomy" id="316067"/>
    <lineage>
        <taxon>Bacteria</taxon>
        <taxon>Pseudomonadati</taxon>
        <taxon>Thermodesulfobacteriota</taxon>
        <taxon>Desulfuromonadia</taxon>
        <taxon>Geobacterales</taxon>
        <taxon>Geobacteraceae</taxon>
        <taxon>Geotalea</taxon>
    </lineage>
</organism>
<protein>
    <recommendedName>
        <fullName evidence="1">Arginine--tRNA ligase</fullName>
        <ecNumber evidence="1">6.1.1.19</ecNumber>
    </recommendedName>
    <alternativeName>
        <fullName evidence="1">Arginyl-tRNA synthetase</fullName>
        <shortName evidence="1">ArgRS</shortName>
    </alternativeName>
</protein>